<accession>Q8LP10</accession>
<reference key="1">
    <citation type="journal article" date="2003" name="Plant Cell Rep.">
        <title>Thermoinduction of genes encoding the enzymes of gibberellin biosynthesis and a putative negative regulator of gibberellin signal transduction in Eustoma grandiflorum.</title>
        <authorList>
            <person name="Mino M."/>
            <person name="Oka M."/>
            <person name="Tasaka Y."/>
            <person name="Iwabuchi M."/>
        </authorList>
    </citation>
    <scope>NUCLEOTIDE SEQUENCE [MRNA]</scope>
    <scope>FUNCTION</scope>
    <scope>INDUCTION</scope>
</reference>
<sequence>MIEKAIVAKPKGLLKGVQSSSDSKGSPVKKSLEGKEAITYAKILRSRNKFVDALAIYELEKDSKNVEAHIGKGICLQTQNKGNLAFDCFSEAIRLDPHNACALTHCGILYKDEGRLVEAASYQKALQADPSYKPAAECLATVLNDLGTSLKGNTQEGIQKYYEAVKIDPHYAPACYNLGVVYSEMMQYDVALSCYERAATESPTYADAYCNTGIIYKNRGDLCLAVSPNFEIAKNNMGIALTDLGTKEKLEGDIDQGVAYYKKALYYNWHYSDAMYNLGVAYGEMLKFDMAIIFDELAFHFNPHCAEACNNLGVIYKDRDNLDKAVECYQKALSIKPNFSQSLNNLGVVFTVQGKMDAAASMIEKAIVANPTYAEAYNNLGVLYRDAGNIFLAIEAYEQCLKIDPDSRNAGQNRLLAMNYINEGADDRLYEAHRDWGGRFMRLYSQYTSWDNPKDPERPLVIGYGSPDHFLSYFIEAPLLYHDYENFKVVTYSAVVKADAKTNRFRERVLKKGGIWRDIYGIDEKKVASMIREDKVDILIELTGHTANNKLGMMACRPAPIQVTWIGYPNTTGLPTIDYRITDSLADPLDTKQKHVEELIQLPACFLCYTPSPEAGPVSPTPALSNGFITFGSFNNLAKITPKVLQVWARILCAVSNSRLIVKCKPFCCESVRQTFLSTLEQLGLESTRVDLLPLILLNHDHMQAYSLMDISLDTFPYAGTTTTCESLYMGVPCITMRGLVHAHNVGVSLLSTVGLGHLVAKNEDDYVRLAVQLASDVTALSNLRLTLRELMSKSPLCDGPKFIQDLELTYRSMWHRYCKGDIPSLSRMEILQKEELDVVQEQLHQQPNTSPQKLVKDEPADDASGPEHGPASKDNPLVLIKINGYNTSPSSITSPSSEENGVSQTRMLNCGDQCFRV</sequence>
<evidence type="ECO:0000250" key="1"/>
<evidence type="ECO:0000250" key="2">
    <source>
        <dbReference type="UniProtKB" id="Q96301"/>
    </source>
</evidence>
<evidence type="ECO:0000256" key="3">
    <source>
        <dbReference type="SAM" id="MobiDB-lite"/>
    </source>
</evidence>
<evidence type="ECO:0000269" key="4">
    <source>
    </source>
</evidence>
<evidence type="ECO:0000305" key="5"/>
<name>SPY_EUSER</name>
<proteinExistence type="evidence at transcript level"/>
<dbReference type="EC" id="2.4.1.255" evidence="2"/>
<dbReference type="EMBL" id="AB080739">
    <property type="protein sequence ID" value="BAC11808.1"/>
    <property type="molecule type" value="mRNA"/>
</dbReference>
<dbReference type="SMR" id="Q8LP10"/>
<dbReference type="CAZy" id="GT41">
    <property type="family name" value="Glycosyltransferase Family 41"/>
</dbReference>
<dbReference type="UniPathway" id="UPA00378"/>
<dbReference type="GO" id="GO:0005634">
    <property type="term" value="C:nucleus"/>
    <property type="evidence" value="ECO:0007669"/>
    <property type="project" value="UniProtKB-SubCell"/>
</dbReference>
<dbReference type="GO" id="GO:0097363">
    <property type="term" value="F:protein O-acetylglucosaminyltransferase activity"/>
    <property type="evidence" value="ECO:0007669"/>
    <property type="project" value="UniProtKB-EC"/>
</dbReference>
<dbReference type="GO" id="GO:0009740">
    <property type="term" value="P:gibberellic acid mediated signaling pathway"/>
    <property type="evidence" value="ECO:0007669"/>
    <property type="project" value="UniProtKB-KW"/>
</dbReference>
<dbReference type="GO" id="GO:0006486">
    <property type="term" value="P:protein glycosylation"/>
    <property type="evidence" value="ECO:0007669"/>
    <property type="project" value="UniProtKB-UniPathway"/>
</dbReference>
<dbReference type="Gene3D" id="3.40.50.11380">
    <property type="match status" value="1"/>
</dbReference>
<dbReference type="Gene3D" id="3.40.50.2000">
    <property type="entry name" value="Glycogen Phosphorylase B"/>
    <property type="match status" value="1"/>
</dbReference>
<dbReference type="Gene3D" id="1.25.40.10">
    <property type="entry name" value="Tetratricopeptide repeat domain"/>
    <property type="match status" value="3"/>
</dbReference>
<dbReference type="InterPro" id="IPR051939">
    <property type="entry name" value="Glycosyltr_41/O-GlcNAc_trsf"/>
</dbReference>
<dbReference type="InterPro" id="IPR029489">
    <property type="entry name" value="OGT/SEC/SPY_C"/>
</dbReference>
<dbReference type="InterPro" id="IPR006597">
    <property type="entry name" value="Sel1-like"/>
</dbReference>
<dbReference type="InterPro" id="IPR011990">
    <property type="entry name" value="TPR-like_helical_dom_sf"/>
</dbReference>
<dbReference type="InterPro" id="IPR019734">
    <property type="entry name" value="TPR_rpt"/>
</dbReference>
<dbReference type="PANTHER" id="PTHR44835:SF1">
    <property type="entry name" value="PROTEIN O-GLCNAC TRANSFERASE"/>
    <property type="match status" value="1"/>
</dbReference>
<dbReference type="PANTHER" id="PTHR44835">
    <property type="entry name" value="UDP-N-ACETYLGLUCOSAMINE--PEPTIDE N-ACETYLGLUCOSAMINYLTRANSFERASE SPINDLY-RELATED"/>
    <property type="match status" value="1"/>
</dbReference>
<dbReference type="Pfam" id="PF13844">
    <property type="entry name" value="Glyco_transf_41"/>
    <property type="match status" value="2"/>
</dbReference>
<dbReference type="Pfam" id="PF00515">
    <property type="entry name" value="TPR_1"/>
    <property type="match status" value="2"/>
</dbReference>
<dbReference type="Pfam" id="PF13181">
    <property type="entry name" value="TPR_8"/>
    <property type="match status" value="1"/>
</dbReference>
<dbReference type="SMART" id="SM00671">
    <property type="entry name" value="SEL1"/>
    <property type="match status" value="3"/>
</dbReference>
<dbReference type="SMART" id="SM00028">
    <property type="entry name" value="TPR"/>
    <property type="match status" value="9"/>
</dbReference>
<dbReference type="SUPFAM" id="SSF48452">
    <property type="entry name" value="TPR-like"/>
    <property type="match status" value="3"/>
</dbReference>
<dbReference type="PROSITE" id="PS50005">
    <property type="entry name" value="TPR"/>
    <property type="match status" value="9"/>
</dbReference>
<dbReference type="PROSITE" id="PS50293">
    <property type="entry name" value="TPR_REGION"/>
    <property type="match status" value="1"/>
</dbReference>
<comment type="function">
    <text evidence="1 4">Probable O-linked N-acetylglucosamine transferase (OGT) involved in various processes such as gibberellin (GA) signaling pathway. OGTs catalyze the addition of nucleotide-activated sugars directly onto the polypeptide through O-glycosidic linkage with the hydroxyl of serine or threonine. Probably acts by adding O-linked sugars to yet unknown proteins (By similarity). May function as a negative regulator of GA signal transduction during vernalization, inhibiting adventitious shoot elongation during vernalization.</text>
</comment>
<comment type="catalytic activity">
    <reaction evidence="2">
        <text>L-seryl-[protein] + UDP-N-acetyl-alpha-D-glucosamine = 3-O-(N-acetyl-beta-D-glucosaminyl)-L-seryl-[protein] + UDP + H(+)</text>
        <dbReference type="Rhea" id="RHEA:48904"/>
        <dbReference type="Rhea" id="RHEA-COMP:9863"/>
        <dbReference type="Rhea" id="RHEA-COMP:12251"/>
        <dbReference type="ChEBI" id="CHEBI:15378"/>
        <dbReference type="ChEBI" id="CHEBI:29999"/>
        <dbReference type="ChEBI" id="CHEBI:57705"/>
        <dbReference type="ChEBI" id="CHEBI:58223"/>
        <dbReference type="ChEBI" id="CHEBI:90838"/>
        <dbReference type="EC" id="2.4.1.255"/>
    </reaction>
</comment>
<comment type="catalytic activity">
    <reaction evidence="2">
        <text>L-threonyl-[protein] + UDP-N-acetyl-alpha-D-glucosamine = 3-O-(N-acetyl-beta-D-glucosaminyl)-L-threonyl-[protein] + UDP + H(+)</text>
        <dbReference type="Rhea" id="RHEA:48908"/>
        <dbReference type="Rhea" id="RHEA-COMP:11060"/>
        <dbReference type="Rhea" id="RHEA-COMP:12252"/>
        <dbReference type="ChEBI" id="CHEBI:15378"/>
        <dbReference type="ChEBI" id="CHEBI:30013"/>
        <dbReference type="ChEBI" id="CHEBI:57705"/>
        <dbReference type="ChEBI" id="CHEBI:58223"/>
        <dbReference type="ChEBI" id="CHEBI:90840"/>
        <dbReference type="EC" id="2.4.1.255"/>
    </reaction>
</comment>
<comment type="pathway">
    <text>Protein modification; protein glycosylation.</text>
</comment>
<comment type="subcellular location">
    <subcellularLocation>
        <location evidence="1">Nucleus</location>
    </subcellularLocation>
</comment>
<comment type="induction">
    <text evidence="4">During vernalization.</text>
</comment>
<comment type="similarity">
    <text evidence="5">Belongs to the glycosyltransferase 41 family. O-GlcNAc transferase subfamily.</text>
</comment>
<feature type="chain" id="PRO_0000191777" description="Probable UDP-N-acetylglucosamine--peptide N-acetylglucosaminyltransferase SPINDLY">
    <location>
        <begin position="1"/>
        <end position="918"/>
    </location>
</feature>
<feature type="repeat" description="TPR 1">
    <location>
        <begin position="34"/>
        <end position="66"/>
    </location>
</feature>
<feature type="repeat" description="TPR 2">
    <location>
        <begin position="67"/>
        <end position="99"/>
    </location>
</feature>
<feature type="repeat" description="TPR 3">
    <location>
        <begin position="101"/>
        <end position="132"/>
    </location>
</feature>
<feature type="repeat" description="TPR 4">
    <location>
        <begin position="140"/>
        <end position="171"/>
    </location>
</feature>
<feature type="repeat" description="TPR 5">
    <location>
        <begin position="172"/>
        <end position="205"/>
    </location>
</feature>
<feature type="repeat" description="TPR 6">
    <location>
        <begin position="207"/>
        <end position="238"/>
    </location>
</feature>
<feature type="repeat" description="TPR 7">
    <location>
        <begin position="239"/>
        <end position="271"/>
    </location>
</feature>
<feature type="repeat" description="TPR 8">
    <location>
        <begin position="273"/>
        <end position="305"/>
    </location>
</feature>
<feature type="repeat" description="TPR 9">
    <location>
        <begin position="306"/>
        <end position="339"/>
    </location>
</feature>
<feature type="repeat" description="TPR 10">
    <location>
        <begin position="341"/>
        <end position="373"/>
    </location>
</feature>
<feature type="repeat" description="TPR 11">
    <location>
        <begin position="374"/>
        <end position="407"/>
    </location>
</feature>
<feature type="region of interest" description="Catalytic region">
    <location>
        <begin position="408"/>
        <end position="918"/>
    </location>
</feature>
<feature type="region of interest" description="Disordered" evidence="3">
    <location>
        <begin position="843"/>
        <end position="877"/>
    </location>
</feature>
<feature type="compositionally biased region" description="Polar residues" evidence="3">
    <location>
        <begin position="843"/>
        <end position="853"/>
    </location>
</feature>
<organism>
    <name type="scientific">Eustoma exaltatum subsp. russellianum</name>
    <name type="common">Bluebells</name>
    <name type="synonym">Eustoma grandiflorum</name>
    <dbReference type="NCBI Taxonomy" id="52518"/>
    <lineage>
        <taxon>Eukaryota</taxon>
        <taxon>Viridiplantae</taxon>
        <taxon>Streptophyta</taxon>
        <taxon>Embryophyta</taxon>
        <taxon>Tracheophyta</taxon>
        <taxon>Spermatophyta</taxon>
        <taxon>Magnoliopsida</taxon>
        <taxon>eudicotyledons</taxon>
        <taxon>Gunneridae</taxon>
        <taxon>Pentapetalae</taxon>
        <taxon>asterids</taxon>
        <taxon>lamiids</taxon>
        <taxon>Gentianales</taxon>
        <taxon>Gentianaceae</taxon>
        <taxon>Chironieae</taxon>
        <taxon>Chironiinae</taxon>
        <taxon>Eustoma</taxon>
    </lineage>
</organism>
<protein>
    <recommendedName>
        <fullName>Probable UDP-N-acetylglucosamine--peptide N-acetylglucosaminyltransferase SPINDLY</fullName>
        <shortName>EgSPY</shortName>
        <ecNumber evidence="2">2.4.1.255</ecNumber>
    </recommendedName>
</protein>
<keyword id="KW-0939">Gibberellin signaling pathway</keyword>
<keyword id="KW-0328">Glycosyltransferase</keyword>
<keyword id="KW-0539">Nucleus</keyword>
<keyword id="KW-0677">Repeat</keyword>
<keyword id="KW-0802">TPR repeat</keyword>
<keyword id="KW-0808">Transferase</keyword>
<gene>
    <name type="primary">SPY</name>
</gene>